<reference key="1">
    <citation type="journal article" date="1990" name="Nucleic Acids Res.">
        <title>Nucleotide sequence of the region coding for 100K and 33K proteins of human enteric adenovirus type 41 (Tak).</title>
        <authorList>
            <person name="Slemenda S.B."/>
            <person name="Pieniazek N.J."/>
            <person name="Velarde J. Jr."/>
            <person name="Pieniazek D."/>
            <person name="Luftig R.B."/>
        </authorList>
    </citation>
    <scope>NUCLEOTIDE SEQUENCE [GENOMIC DNA]</scope>
    <source>
        <strain>Tak</strain>
    </source>
</reference>
<reference key="2">
    <citation type="journal article" date="1988" name="Virology">
        <title>The genes encoding the DNA binding protein and the 23K protease of adenovirus types 40 and 41.</title>
        <authorList>
            <person name="Vos H.L."/>
            <person name="der Lee F.M."/>
            <person name="Reemst A.M.C.B."/>
            <person name="van Loon A.E."/>
            <person name="Sussenbach J.S."/>
        </authorList>
    </citation>
    <scope>NUCLEOTIDE SEQUENCE [GENOMIC DNA] OF 1-651</scope>
</reference>
<comment type="function">
    <text evidence="1">Protein that inhibits host translation while promoting late viral translation by ribosome shunting. Blocks host cap-dependent translation by binding to eIF4G, displacing MKNK1 from cap initiation complexes and preventing EIF4E phosphorylation. Binds to the tripartite leader sequence of viral late mRNAs and recruits host eIF4G, PABPC1/poly-A binding protein and 40S ribosomes subunits on viral mRNAs, allowing ribosome shunting and efficient translation of late viral mRNAs even though conventional translation via ribosome scanning from the cap has been shut off in the host cell. During assembly, acts as a chaperone protein that helps hexon proteins assembly into trimers.</text>
</comment>
<comment type="subunit">
    <text evidence="1">Monomer. Interacts with hexon protein; this interaction allows chaperoning and trimerization of hexon proteins. Interacts (via N-terminus) with host initiation factor EIF4G (via C-terminus). Interacts (via RRM domain) with viral mRNAs that contain the tripartite leader; this interaction allows ribosome shunting and expression of viral late mRNAs.</text>
</comment>
<comment type="subcellular location">
    <subcellularLocation>
        <location evidence="1">Host cytoplasm</location>
    </subcellularLocation>
</comment>
<comment type="induction">
    <text evidence="1">Expressed in the late phase of the viral replicative cycle.</text>
</comment>
<comment type="PTM">
    <text evidence="1">Might be cleaved by the viral protease.</text>
</comment>
<comment type="PTM">
    <text evidence="1">Phosphorylated. Tyrosine phosphorylation enhances preferential binding to tripartite leader mRNAs and allows ribosome shunting.</text>
</comment>
<comment type="PTM">
    <text evidence="1">Methylated. Asymmetric dimethylation by host PRMT1 of the Arg/Gly-rich region may regulate shutoff protein binding to hexon and promote the capsid assembly in the nucleus.</text>
</comment>
<comment type="miscellaneous">
    <text evidence="1">All late proteins expressed from the major late promoter are produced by alternative splicing and alternative polyadenylation of the same gene giving rise to non-overlapping ORFs. A leader sequence is present in the N-terminus of all these mRNAs and is recognized by the viral shutoff protein to provide expression although conventional translation via ribosome scanning from the cap has been shut off in the host cell.</text>
</comment>
<comment type="similarity">
    <text evidence="1">Belongs to the adenoviridae shutoff protein family.</text>
</comment>
<name>SHUT_ADE41</name>
<protein>
    <recommendedName>
        <fullName evidence="1">Shutoff protein</fullName>
    </recommendedName>
    <alternativeName>
        <fullName evidence="1">100 kDa protein</fullName>
        <shortName evidence="1">p100K</shortName>
    </alternativeName>
    <alternativeName>
        <fullName evidence="1">100K-chaperone protein</fullName>
    </alternativeName>
    <alternativeName>
        <fullName evidence="1">L4-100K</fullName>
    </alternativeName>
    <alternativeName>
        <fullName evidence="1">Shutoff protein 100K</fullName>
    </alternativeName>
</protein>
<feature type="chain" id="PRO_0000221859" description="Shutoff protein">
    <location>
        <begin position="1"/>
        <end position="777"/>
    </location>
</feature>
<feature type="domain" description="RRM" evidence="1">
    <location>
        <begin position="317"/>
        <end position="435"/>
    </location>
</feature>
<feature type="region of interest" description="Disordered" evidence="2">
    <location>
        <begin position="1"/>
        <end position="55"/>
    </location>
</feature>
<feature type="region of interest" description="Binding to host EIF4G" evidence="1">
    <location>
        <begin position="250"/>
        <end position="314"/>
    </location>
</feature>
<feature type="region of interest" description="Disordered" evidence="2">
    <location>
        <begin position="261"/>
        <end position="283"/>
    </location>
</feature>
<feature type="region of interest" description="Disordered" evidence="2">
    <location>
        <begin position="652"/>
        <end position="777"/>
    </location>
</feature>
<feature type="compositionally biased region" description="Polar residues" evidence="2">
    <location>
        <begin position="9"/>
        <end position="20"/>
    </location>
</feature>
<feature type="compositionally biased region" description="Polar residues" evidence="2">
    <location>
        <begin position="656"/>
        <end position="665"/>
    </location>
</feature>
<feature type="compositionally biased region" description="Gly residues" evidence="2">
    <location>
        <begin position="728"/>
        <end position="738"/>
    </location>
</feature>
<feature type="compositionally biased region" description="Basic and acidic residues" evidence="2">
    <location>
        <begin position="753"/>
        <end position="763"/>
    </location>
</feature>
<feature type="modified residue" description="Phosphotyrosine; by host" evidence="1">
    <location>
        <position position="334"/>
    </location>
</feature>
<feature type="modified residue" description="Phosphotyrosine; by host" evidence="1">
    <location>
        <position position="649"/>
    </location>
</feature>
<keyword id="KW-0143">Chaperone</keyword>
<keyword id="KW-1262">Eukaryotic host gene expression shutoff by virus</keyword>
<keyword id="KW-1193">Eukaryotic host translation shutoff by virus</keyword>
<keyword id="KW-1035">Host cytoplasm</keyword>
<keyword id="KW-1190">Host gene expression shutoff by virus</keyword>
<keyword id="KW-0945">Host-virus interaction</keyword>
<keyword id="KW-1075">Inhibition of eukaryotic host translation factors by virus</keyword>
<keyword id="KW-0426">Late protein</keyword>
<keyword id="KW-0488">Methylation</keyword>
<keyword id="KW-0597">Phosphoprotein</keyword>
<keyword id="KW-0694">RNA-binding</keyword>
<keyword id="KW-1155">Translational shunt</keyword>
<keyword id="KW-0813">Transport</keyword>
<organismHost>
    <name type="scientific">Homo sapiens</name>
    <name type="common">Human</name>
    <dbReference type="NCBI Taxonomy" id="9606"/>
</organismHost>
<accession>P11824</accession>
<proteinExistence type="inferred from homology"/>
<sequence>MEEDLIQPQPDSETLTSPTSEVGAVELVEHEDDERVEQDPGYVTPPKDGKESVPVSPLTEADYLGGEDDVLLKHVLRQSTIVQEAFKDYSGFPLTVEELSRTYEANLFSPRVPPKKQANGTCEPNPRLNFYPVFAVPEALATYHIFFKNQRIPLSCRANRTQGDRILHLKAGAHIPEIVSLEEVPKIFEGLGKDEKRAANALQKSETENQNVLVELDGDNARLAVLKRTIEVSHFAYPALNLPPKVMRSVMDHLLIKRVEPLDSDQPEQNSEDGQPVVSDDDLARWLDSHDPTTLQERRKMMMAVILVTVELECLQRFFANPQTLRKIEESLHYAFRHGYVRQACKISNVELSNLVSYMGILHENRLGQNVLHCTLQGEARRDYVRDCIYLFLILTWQTAMGVWQQCLEERNLRELEKLLVRNRRELWTAFSERTAACQLADLIFPERLMQTLQNGLPDFVSQSILQNFRSFILERSGILPAMSCALPSDFVPLCYRECPPPLWSHCYLLRLANYLAHHSDLMENSSGEGLLECHCRCNLCTPHRSLVCNTELLSETQVIGTFEIQGPERQEGASNLKLTPALWTSAYLRKFIPEDYHAHQIKFYEDQSRPPKAPLTACVITQSQILAQLQAIQQARQEFLLKKGHGVYLDPQTGEELNTPSPSAAASCRPQKHAAQREQASHCGSAVPKATETARAVGRGGGILGRQPGRGSFRRGGNGELGKSRRGAGGQTPQGRGGRNHRQRRGTVFQRTRSEPASDGESRTVPAAARLVESQP</sequence>
<organism>
    <name type="scientific">Human adenovirus F serotype 41</name>
    <name type="common">HAdV-41</name>
    <name type="synonym">Human adenovirus 41</name>
    <dbReference type="NCBI Taxonomy" id="10524"/>
    <lineage>
        <taxon>Viruses</taxon>
        <taxon>Varidnaviria</taxon>
        <taxon>Bamfordvirae</taxon>
        <taxon>Preplasmiviricota</taxon>
        <taxon>Tectiliviricetes</taxon>
        <taxon>Rowavirales</taxon>
        <taxon>Adenoviridae</taxon>
        <taxon>Mastadenovirus</taxon>
        <taxon>Human mastadenovirus F</taxon>
    </lineage>
</organism>
<gene>
    <name evidence="1" type="primary">L4</name>
</gene>
<dbReference type="EMBL" id="X52532">
    <property type="protein sequence ID" value="CAA36760.1"/>
    <property type="molecule type" value="Genomic_DNA"/>
</dbReference>
<dbReference type="EMBL" id="AH002308">
    <property type="protein sequence ID" value="AAA42464.1"/>
    <property type="molecule type" value="Genomic_DNA"/>
</dbReference>
<dbReference type="PIR" id="S10207">
    <property type="entry name" value="WMAD41"/>
</dbReference>
<dbReference type="GO" id="GO:0043657">
    <property type="term" value="C:host cell"/>
    <property type="evidence" value="ECO:0007669"/>
    <property type="project" value="GOC"/>
</dbReference>
<dbReference type="GO" id="GO:0030430">
    <property type="term" value="C:host cell cytoplasm"/>
    <property type="evidence" value="ECO:0007669"/>
    <property type="project" value="UniProtKB-SubCell"/>
</dbReference>
<dbReference type="GO" id="GO:0003723">
    <property type="term" value="F:RNA binding"/>
    <property type="evidence" value="ECO:0007669"/>
    <property type="project" value="UniProtKB-UniRule"/>
</dbReference>
<dbReference type="GO" id="GO:0019060">
    <property type="term" value="P:intracellular transport of viral protein in host cell"/>
    <property type="evidence" value="ECO:0007669"/>
    <property type="project" value="UniProtKB-UniRule"/>
</dbReference>
<dbReference type="GO" id="GO:0039657">
    <property type="term" value="P:symbiont-mediated suppression of host gene expression"/>
    <property type="evidence" value="ECO:0007669"/>
    <property type="project" value="UniProtKB-UniRule"/>
</dbReference>
<dbReference type="GO" id="GO:0039606">
    <property type="term" value="P:symbiont-mediated suppression of host translation initiation"/>
    <property type="evidence" value="ECO:0007669"/>
    <property type="project" value="UniProtKB-KW"/>
</dbReference>
<dbReference type="GO" id="GO:0039704">
    <property type="term" value="P:viral translational shunt"/>
    <property type="evidence" value="ECO:0000250"/>
    <property type="project" value="UniProtKB"/>
</dbReference>
<dbReference type="HAMAP" id="MF_04060">
    <property type="entry name" value="ADV_SHUT"/>
    <property type="match status" value="1"/>
</dbReference>
<dbReference type="InterPro" id="IPR003381">
    <property type="entry name" value="L4"/>
</dbReference>
<dbReference type="Pfam" id="PF02438">
    <property type="entry name" value="Adeno_100"/>
    <property type="match status" value="1"/>
</dbReference>
<evidence type="ECO:0000255" key="1">
    <source>
        <dbReference type="HAMAP-Rule" id="MF_04060"/>
    </source>
</evidence>
<evidence type="ECO:0000256" key="2">
    <source>
        <dbReference type="SAM" id="MobiDB-lite"/>
    </source>
</evidence>